<gene>
    <name type="primary">slc25a25a</name>
    <name type="synonym">scamc2a</name>
    <name type="synonym">slc25a25</name>
    <name type="ORF">zgc:77454</name>
</gene>
<proteinExistence type="evidence at transcript level"/>
<organism>
    <name type="scientific">Danio rerio</name>
    <name type="common">Zebrafish</name>
    <name type="synonym">Brachydanio rerio</name>
    <dbReference type="NCBI Taxonomy" id="7955"/>
    <lineage>
        <taxon>Eukaryota</taxon>
        <taxon>Metazoa</taxon>
        <taxon>Chordata</taxon>
        <taxon>Craniata</taxon>
        <taxon>Vertebrata</taxon>
        <taxon>Euteleostomi</taxon>
        <taxon>Actinopterygii</taxon>
        <taxon>Neopterygii</taxon>
        <taxon>Teleostei</taxon>
        <taxon>Ostariophysi</taxon>
        <taxon>Cypriniformes</taxon>
        <taxon>Danionidae</taxon>
        <taxon>Danioninae</taxon>
        <taxon>Danio</taxon>
    </lineage>
</organism>
<dbReference type="EMBL" id="BC066404">
    <property type="protein sequence ID" value="AAH66404.1"/>
    <property type="molecule type" value="mRNA"/>
</dbReference>
<dbReference type="RefSeq" id="NP_998422.1">
    <property type="nucleotide sequence ID" value="NM_213257.1"/>
</dbReference>
<dbReference type="SMR" id="Q6NYZ6"/>
<dbReference type="FunCoup" id="Q6NYZ6">
    <property type="interactions" value="2183"/>
</dbReference>
<dbReference type="STRING" id="7955.ENSDARP00000008863"/>
<dbReference type="PaxDb" id="7955-ENSDARP00000008863"/>
<dbReference type="Ensembl" id="ENSDART00000027214">
    <property type="protein sequence ID" value="ENSDARP00000008863"/>
    <property type="gene ID" value="ENSDARG00000010572"/>
</dbReference>
<dbReference type="GeneID" id="406541"/>
<dbReference type="KEGG" id="dre:406541"/>
<dbReference type="AGR" id="ZFIN:ZDB-GENE-040426-2396"/>
<dbReference type="CTD" id="406541"/>
<dbReference type="ZFIN" id="ZDB-GENE-040426-2396">
    <property type="gene designation" value="slc25a25a"/>
</dbReference>
<dbReference type="eggNOG" id="KOG0036">
    <property type="taxonomic scope" value="Eukaryota"/>
</dbReference>
<dbReference type="HOGENOM" id="CLU_015166_2_0_1"/>
<dbReference type="InParanoid" id="Q6NYZ6"/>
<dbReference type="OMA" id="TRTNNMC"/>
<dbReference type="OrthoDB" id="270584at2759"/>
<dbReference type="PhylomeDB" id="Q6NYZ6"/>
<dbReference type="TreeFam" id="TF313492"/>
<dbReference type="PRO" id="PR:Q6NYZ6"/>
<dbReference type="Proteomes" id="UP000000437">
    <property type="component" value="Chromosome 8"/>
</dbReference>
<dbReference type="Bgee" id="ENSDARG00000010572">
    <property type="expression patterns" value="Expressed in cleaving embryo and 35 other cell types or tissues"/>
</dbReference>
<dbReference type="GO" id="GO:0005743">
    <property type="term" value="C:mitochondrial inner membrane"/>
    <property type="evidence" value="ECO:0007669"/>
    <property type="project" value="UniProtKB-SubCell"/>
</dbReference>
<dbReference type="GO" id="GO:0005347">
    <property type="term" value="F:ATP transmembrane transporter activity"/>
    <property type="evidence" value="ECO:0000318"/>
    <property type="project" value="GO_Central"/>
</dbReference>
<dbReference type="GO" id="GO:0005509">
    <property type="term" value="F:calcium ion binding"/>
    <property type="evidence" value="ECO:0007669"/>
    <property type="project" value="InterPro"/>
</dbReference>
<dbReference type="GO" id="GO:0015866">
    <property type="term" value="P:ADP transport"/>
    <property type="evidence" value="ECO:0000318"/>
    <property type="project" value="GO_Central"/>
</dbReference>
<dbReference type="GO" id="GO:0015867">
    <property type="term" value="P:ATP transport"/>
    <property type="evidence" value="ECO:0000318"/>
    <property type="project" value="GO_Central"/>
</dbReference>
<dbReference type="FunFam" id="1.10.238.10:FF:000028">
    <property type="entry name" value="Putative calcium-binding mitochondrial carrier protein scamc-2"/>
    <property type="match status" value="1"/>
</dbReference>
<dbReference type="FunFam" id="1.50.40.10:FF:000003">
    <property type="entry name" value="Putative calcium-binding mitochondrial carrier protein scamc-2"/>
    <property type="match status" value="1"/>
</dbReference>
<dbReference type="Gene3D" id="1.10.238.10">
    <property type="entry name" value="EF-hand"/>
    <property type="match status" value="2"/>
</dbReference>
<dbReference type="Gene3D" id="1.50.40.10">
    <property type="entry name" value="Mitochondrial carrier domain"/>
    <property type="match status" value="1"/>
</dbReference>
<dbReference type="InterPro" id="IPR011992">
    <property type="entry name" value="EF-hand-dom_pair"/>
</dbReference>
<dbReference type="InterPro" id="IPR002048">
    <property type="entry name" value="EF_hand_dom"/>
</dbReference>
<dbReference type="InterPro" id="IPR002167">
    <property type="entry name" value="GDC-like"/>
</dbReference>
<dbReference type="InterPro" id="IPR002067">
    <property type="entry name" value="Mit_carrier"/>
</dbReference>
<dbReference type="InterPro" id="IPR018108">
    <property type="entry name" value="Mitochondrial_sb/sol_carrier"/>
</dbReference>
<dbReference type="InterPro" id="IPR023395">
    <property type="entry name" value="Mt_carrier_dom_sf"/>
</dbReference>
<dbReference type="PANTHER" id="PTHR24089">
    <property type="entry name" value="SOLUTE CARRIER FAMILY 25"/>
    <property type="match status" value="1"/>
</dbReference>
<dbReference type="Pfam" id="PF00153">
    <property type="entry name" value="Mito_carr"/>
    <property type="match status" value="3"/>
</dbReference>
<dbReference type="PRINTS" id="PR00928">
    <property type="entry name" value="GRAVESDC"/>
</dbReference>
<dbReference type="PRINTS" id="PR00926">
    <property type="entry name" value="MITOCARRIER"/>
</dbReference>
<dbReference type="SUPFAM" id="SSF47473">
    <property type="entry name" value="EF-hand"/>
    <property type="match status" value="1"/>
</dbReference>
<dbReference type="SUPFAM" id="SSF103506">
    <property type="entry name" value="Mitochondrial carrier"/>
    <property type="match status" value="1"/>
</dbReference>
<dbReference type="PROSITE" id="PS50222">
    <property type="entry name" value="EF_HAND_2"/>
    <property type="match status" value="2"/>
</dbReference>
<dbReference type="PROSITE" id="PS50920">
    <property type="entry name" value="SOLCAR"/>
    <property type="match status" value="3"/>
</dbReference>
<feature type="chain" id="PRO_0000317605" description="Calcium-binding mitochondrial carrier protein SCaMC-2-A">
    <location>
        <begin position="1"/>
        <end position="469"/>
    </location>
</feature>
<feature type="topological domain" description="Mitochondrial intermembrane" evidence="2">
    <location>
        <begin position="1"/>
        <end position="189"/>
    </location>
</feature>
<feature type="transmembrane region" description="Helical; Name=1" evidence="2">
    <location>
        <begin position="190"/>
        <end position="207"/>
    </location>
</feature>
<feature type="topological domain" description="Mitochondrial matrix" evidence="2">
    <location>
        <begin position="208"/>
        <end position="244"/>
    </location>
</feature>
<feature type="transmembrane region" description="Helical; Name=2" evidence="2">
    <location>
        <begin position="245"/>
        <end position="264"/>
    </location>
</feature>
<feature type="topological domain" description="Mitochondrial intermembrane" evidence="2">
    <location>
        <begin position="265"/>
        <end position="287"/>
    </location>
</feature>
<feature type="transmembrane region" description="Helical; Name=3" evidence="2">
    <location>
        <begin position="288"/>
        <end position="301"/>
    </location>
</feature>
<feature type="topological domain" description="Mitochondrial matrix" evidence="2">
    <location>
        <begin position="302"/>
        <end position="337"/>
    </location>
</feature>
<feature type="transmembrane region" description="Helical; Name=4" evidence="2">
    <location>
        <begin position="338"/>
        <end position="357"/>
    </location>
</feature>
<feature type="topological domain" description="Mitochondrial intermembrane" evidence="2">
    <location>
        <begin position="358"/>
        <end position="380"/>
    </location>
</feature>
<feature type="transmembrane region" description="Helical; Name=5" evidence="2">
    <location>
        <begin position="381"/>
        <end position="398"/>
    </location>
</feature>
<feature type="topological domain" description="Mitochondrial matrix" evidence="2">
    <location>
        <begin position="399"/>
        <end position="437"/>
    </location>
</feature>
<feature type="transmembrane region" description="Helical; Name=6" evidence="2">
    <location>
        <begin position="438"/>
        <end position="457"/>
    </location>
</feature>
<feature type="topological domain" description="Mitochondrial intermembrane" evidence="2">
    <location>
        <begin position="458"/>
        <end position="469"/>
    </location>
</feature>
<feature type="domain" description="EF-hand 1" evidence="4">
    <location>
        <begin position="47"/>
        <end position="80"/>
    </location>
</feature>
<feature type="domain" description="EF-hand 2" evidence="3">
    <location>
        <begin position="78"/>
        <end position="113"/>
    </location>
</feature>
<feature type="domain" description="EF-hand 3" evidence="3">
    <location>
        <begin position="114"/>
        <end position="149"/>
    </location>
</feature>
<feature type="repeat" description="Solcar 1">
    <location>
        <begin position="184"/>
        <end position="270"/>
    </location>
</feature>
<feature type="repeat" description="Solcar 2">
    <location>
        <begin position="278"/>
        <end position="363"/>
    </location>
</feature>
<feature type="repeat" description="Solcar 3">
    <location>
        <begin position="375"/>
        <end position="463"/>
    </location>
</feature>
<feature type="binding site" evidence="4">
    <location>
        <position position="64"/>
    </location>
    <ligand>
        <name>Ca(2+)</name>
        <dbReference type="ChEBI" id="CHEBI:29108"/>
    </ligand>
</feature>
<feature type="binding site" evidence="4">
    <location>
        <position position="66"/>
    </location>
    <ligand>
        <name>Ca(2+)</name>
        <dbReference type="ChEBI" id="CHEBI:29108"/>
    </ligand>
</feature>
<feature type="binding site" evidence="4">
    <location>
        <position position="71"/>
    </location>
    <ligand>
        <name>Ca(2+)</name>
        <dbReference type="ChEBI" id="CHEBI:29108"/>
    </ligand>
</feature>
<accession>Q6NYZ6</accession>
<reference key="1">
    <citation type="submission" date="2004-02" db="EMBL/GenBank/DDBJ databases">
        <authorList>
            <consortium name="NIH - Zebrafish Gene Collection (ZGC) project"/>
        </authorList>
    </citation>
    <scope>NUCLEOTIDE SEQUENCE [LARGE SCALE MRNA]</scope>
    <source>
        <tissue>Embryo</tissue>
    </source>
</reference>
<keyword id="KW-0106">Calcium</keyword>
<keyword id="KW-0472">Membrane</keyword>
<keyword id="KW-0479">Metal-binding</keyword>
<keyword id="KW-0496">Mitochondrion</keyword>
<keyword id="KW-0999">Mitochondrion inner membrane</keyword>
<keyword id="KW-1185">Reference proteome</keyword>
<keyword id="KW-0677">Repeat</keyword>
<keyword id="KW-0812">Transmembrane</keyword>
<keyword id="KW-1133">Transmembrane helix</keyword>
<keyword id="KW-0813">Transport</keyword>
<evidence type="ECO:0000250" key="1"/>
<evidence type="ECO:0000255" key="2"/>
<evidence type="ECO:0000255" key="3">
    <source>
        <dbReference type="PROSITE-ProRule" id="PRU00448"/>
    </source>
</evidence>
<evidence type="ECO:0000305" key="4"/>
<comment type="function">
    <text evidence="1">Calcium-dependent mitochondrial solute carrier.</text>
</comment>
<comment type="subcellular location">
    <subcellularLocation>
        <location evidence="1">Mitochondrion inner membrane</location>
        <topology evidence="1">Multi-pass membrane protein</topology>
    </subcellularLocation>
</comment>
<comment type="similarity">
    <text evidence="4">Belongs to the mitochondrial carrier (TC 2.A.29) family.</text>
</comment>
<protein>
    <recommendedName>
        <fullName>Calcium-binding mitochondrial carrier protein SCaMC-2-A</fullName>
    </recommendedName>
    <alternativeName>
        <fullName>Small calcium-binding mitochondrial carrier protein 2-A</fullName>
    </alternativeName>
    <alternativeName>
        <fullName>Solute carrier family 25 member 25-A</fullName>
    </alternativeName>
</protein>
<sequence>MLCLCLYVPVHNSDQIEVEYFESNGLPSELKSLKSLSVLLPSQEFSTYRRWRKKSLKTEEKEHDGQLDFEEFVHYLQDHEKDLKLVFKSMDRKIAGQVNANDIVNSLRDLGVHISLKQAEKVLKSMDKNGTMTIDWNEWKKYPTLQPAENIPEIILYWKHSTIFDVGESLMVPDEFTVEEHLTGMWWRHLVSGGGAGAVSRTCTAPLDRLKVLMQVHGCQGKSMCLMSGLTQMIKEGGVRSLWRGNGINVIKIAPETALKFMAYEQIKRVMGSSQETLGISERFVAGSLAGVIAQSTIYPMEVLKTRLALRKTGQYKGISDCAKHILKTEGMSAFYKGYVPNMLGIIPYAGIDLAVYETLKNTWLQRYGTENADPGVFVLLACGTVSSTCGQLASYPLALIRTRMQAQASVEGSSQVSMTGLFKQIMKTEGPTGLYRGLTPNFLKVIPAVSISYVVYEHIKSTLGVRSR</sequence>
<name>SCM2A_DANRE</name>